<reference evidence="10" key="1">
    <citation type="journal article" date="2014" name="Nat. Commun.">
        <title>Evolution of separate predation- and defence-evoked venoms in carnivorous cone snails.</title>
        <authorList>
            <person name="Dutertre S."/>
            <person name="Jin A.-H."/>
            <person name="Vetter I."/>
            <person name="Hamilton B."/>
            <person name="Sunagar K."/>
            <person name="Lavergne V."/>
            <person name="Dutertre V."/>
            <person name="Fry B.G."/>
            <person name="Antunes A."/>
            <person name="Venter D.J."/>
            <person name="Alewood P.F."/>
            <person name="Lewis R.J."/>
        </authorList>
    </citation>
    <scope>NUCLEOTIDE SEQUENCE [MRNA]</scope>
    <scope>ISOLATION</scope>
    <scope>SUBCELLULAR LOCATION</scope>
    <source>
        <tissue>Venom</tissue>
        <tissue>Venom duct</tissue>
    </source>
</reference>
<reference evidence="11" key="2">
    <citation type="journal article" date="2021" name="Mar. Drugs">
        <title>Chemical synthesis and NMR solution structure of conotoxin GXIA from Conus geographus.</title>
        <authorList>
            <person name="Armstrong D.A."/>
            <person name="Jin A.H."/>
            <person name="Braga Emidio N."/>
            <person name="Lewis R.J."/>
            <person name="Alewood P.F."/>
            <person name="Rosengren K.J."/>
        </authorList>
    </citation>
    <scope>STRUCTURE BY NMR OF 46-77</scope>
    <scope>DISULFIDE BONDS</scope>
</reference>
<sequence length="77" mass="8339">MKLFLAIVLILMLQFLSTGAETSDNHASRSTTALRDWLLGPKAKRCAVTHEKCSDDYDCCGSLCCVGICAKTIAPCK</sequence>
<proteinExistence type="evidence at protein level"/>
<name>I3B1_CONGE</name>
<protein>
    <recommendedName>
        <fullName evidence="7">Conotoxin G11.1</fullName>
    </recommendedName>
    <alternativeName>
        <fullName evidence="5 6">Conotoxin G117</fullName>
    </alternativeName>
    <alternativeName>
        <fullName evidence="6">Conotoxin GXIA</fullName>
    </alternativeName>
</protein>
<comment type="function">
    <text evidence="3 9">May embed in the membrane and bind to the voltage sensor domain of a ion channel (PubMed:24662800). Does not induce paralysis when injected in fish, leading to the hypothesis that it may be part of the sedative nirvana cabal (Probable).</text>
</comment>
<comment type="subcellular location">
    <subcellularLocation>
        <location evidence="3">Secreted</location>
    </subcellularLocation>
</comment>
<comment type="tissue specificity">
    <text evidence="8">Expressed by the venom duct.</text>
</comment>
<comment type="domain">
    <text evidence="7">The cysteine framework is XI (C-C-CC-CC-C-C).</text>
</comment>
<comment type="domain">
    <text evidence="7">The presence of a 'disulfide through disulfide knot' structurally defines this protein as a knottin.</text>
</comment>
<comment type="similarity">
    <text evidence="7">Belongs to the conotoxin I3 superfamily.</text>
</comment>
<accession>X5IY26</accession>
<keyword id="KW-0002">3D-structure</keyword>
<keyword id="KW-0165">Cleavage on pair of basic residues</keyword>
<keyword id="KW-1015">Disulfide bond</keyword>
<keyword id="KW-0872">Ion channel impairing toxin</keyword>
<keyword id="KW-0960">Knottin</keyword>
<keyword id="KW-0964">Secreted</keyword>
<keyword id="KW-0732">Signal</keyword>
<keyword id="KW-0800">Toxin</keyword>
<organism>
    <name type="scientific">Conus geographus</name>
    <name type="common">Geography cone</name>
    <name type="synonym">Nubecula geographus</name>
    <dbReference type="NCBI Taxonomy" id="6491"/>
    <lineage>
        <taxon>Eukaryota</taxon>
        <taxon>Metazoa</taxon>
        <taxon>Spiralia</taxon>
        <taxon>Lophotrochozoa</taxon>
        <taxon>Mollusca</taxon>
        <taxon>Gastropoda</taxon>
        <taxon>Caenogastropoda</taxon>
        <taxon>Neogastropoda</taxon>
        <taxon>Conoidea</taxon>
        <taxon>Conidae</taxon>
        <taxon>Conus</taxon>
        <taxon>Gastridium</taxon>
    </lineage>
</organism>
<dbReference type="EMBL" id="AB910882">
    <property type="protein sequence ID" value="BAO65650.1"/>
    <property type="molecule type" value="mRNA"/>
</dbReference>
<dbReference type="PDB" id="6CEI">
    <property type="method" value="NMR"/>
    <property type="chains" value="A=46-77"/>
</dbReference>
<dbReference type="PDBsum" id="6CEI"/>
<dbReference type="BMRB" id="X5IY26"/>
<dbReference type="SMR" id="X5IY26"/>
<dbReference type="GO" id="GO:0005576">
    <property type="term" value="C:extracellular region"/>
    <property type="evidence" value="ECO:0007669"/>
    <property type="project" value="UniProtKB-SubCell"/>
</dbReference>
<dbReference type="GO" id="GO:0099106">
    <property type="term" value="F:ion channel regulator activity"/>
    <property type="evidence" value="ECO:0007669"/>
    <property type="project" value="UniProtKB-KW"/>
</dbReference>
<dbReference type="GO" id="GO:0090729">
    <property type="term" value="F:toxin activity"/>
    <property type="evidence" value="ECO:0007669"/>
    <property type="project" value="UniProtKB-KW"/>
</dbReference>
<dbReference type="InterPro" id="IPR013141">
    <property type="entry name" value="Conotoxin-I_CS"/>
</dbReference>
<dbReference type="PROSITE" id="PS60019">
    <property type="entry name" value="I_CONOTOXIN"/>
    <property type="match status" value="1"/>
</dbReference>
<feature type="signal peptide" evidence="2">
    <location>
        <begin position="1"/>
        <end position="20"/>
    </location>
</feature>
<feature type="propeptide" id="PRO_0000448283" evidence="1">
    <location>
        <begin position="21"/>
        <end position="45"/>
    </location>
</feature>
<feature type="peptide" id="PRO_5004957649" description="Conotoxin G11.1">
    <location>
        <begin position="46"/>
        <end position="77"/>
    </location>
</feature>
<feature type="disulfide bond" evidence="4 11">
    <location>
        <begin position="46"/>
        <end position="60"/>
    </location>
</feature>
<feature type="disulfide bond" evidence="4 11">
    <location>
        <begin position="53"/>
        <end position="65"/>
    </location>
</feature>
<feature type="disulfide bond" evidence="4 11">
    <location>
        <begin position="59"/>
        <end position="69"/>
    </location>
</feature>
<feature type="disulfide bond" evidence="4 11">
    <location>
        <begin position="64"/>
        <end position="76"/>
    </location>
</feature>
<feature type="helix" evidence="12">
    <location>
        <begin position="56"/>
        <end position="58"/>
    </location>
</feature>
<feature type="strand" evidence="12">
    <location>
        <begin position="64"/>
        <end position="70"/>
    </location>
</feature>
<evidence type="ECO:0000250" key="1">
    <source>
        <dbReference type="UniProtKB" id="D2DGD4"/>
    </source>
</evidence>
<evidence type="ECO:0000255" key="2"/>
<evidence type="ECO:0000269" key="3">
    <source>
    </source>
</evidence>
<evidence type="ECO:0000269" key="4">
    <source>
    </source>
</evidence>
<evidence type="ECO:0000303" key="5">
    <source>
    </source>
</evidence>
<evidence type="ECO:0000303" key="6">
    <source>
    </source>
</evidence>
<evidence type="ECO:0000305" key="7"/>
<evidence type="ECO:0000305" key="8">
    <source>
    </source>
</evidence>
<evidence type="ECO:0000305" key="9">
    <source>
    </source>
</evidence>
<evidence type="ECO:0000312" key="10">
    <source>
        <dbReference type="EMBL" id="BAO65650.1"/>
    </source>
</evidence>
<evidence type="ECO:0007744" key="11">
    <source>
        <dbReference type="PDB" id="6CEI"/>
    </source>
</evidence>
<evidence type="ECO:0007829" key="12">
    <source>
        <dbReference type="PDB" id="6CEI"/>
    </source>
</evidence>